<accession>O81155</accession>
<feature type="transit peptide" description="Chloroplast and chromoplast" evidence="1">
    <location>
        <begin position="1"/>
        <end position="52"/>
    </location>
</feature>
<feature type="chain" id="PRO_0000006351" description="Cysteine synthase, chloroplastic/chromoplastic">
    <location>
        <begin position="53"/>
        <end position="386"/>
    </location>
</feature>
<feature type="binding site" evidence="1">
    <location>
        <position position="141"/>
    </location>
    <ligand>
        <name>pyridoxal 5'-phosphate</name>
        <dbReference type="ChEBI" id="CHEBI:597326"/>
    </ligand>
</feature>
<feature type="binding site" evidence="1">
    <location>
        <begin position="245"/>
        <end position="249"/>
    </location>
    <ligand>
        <name>pyridoxal 5'-phosphate</name>
        <dbReference type="ChEBI" id="CHEBI:597326"/>
    </ligand>
</feature>
<feature type="binding site" evidence="1">
    <location>
        <position position="333"/>
    </location>
    <ligand>
        <name>pyridoxal 5'-phosphate</name>
        <dbReference type="ChEBI" id="CHEBI:597326"/>
    </ligand>
</feature>
<feature type="modified residue" description="N6-(pyridoxal phosphate)lysine" evidence="1">
    <location>
        <position position="110"/>
    </location>
</feature>
<comment type="catalytic activity">
    <reaction>
        <text>O-acetyl-L-serine + hydrogen sulfide = L-cysteine + acetate</text>
        <dbReference type="Rhea" id="RHEA:14829"/>
        <dbReference type="ChEBI" id="CHEBI:29919"/>
        <dbReference type="ChEBI" id="CHEBI:30089"/>
        <dbReference type="ChEBI" id="CHEBI:35235"/>
        <dbReference type="ChEBI" id="CHEBI:58340"/>
        <dbReference type="EC" id="2.5.1.47"/>
    </reaction>
</comment>
<comment type="cofactor">
    <cofactor evidence="1">
        <name>pyridoxal 5'-phosphate</name>
        <dbReference type="ChEBI" id="CHEBI:597326"/>
    </cofactor>
</comment>
<comment type="pathway">
    <text>Amino-acid biosynthesis; L-cysteine biosynthesis; L-cysteine from L-serine: step 2/2.</text>
</comment>
<comment type="subunit">
    <text evidence="1">Homodimer.</text>
</comment>
<comment type="subcellular location">
    <subcellularLocation>
        <location evidence="1">Plastid</location>
        <location evidence="1">Chloroplast stroma</location>
    </subcellularLocation>
    <subcellularLocation>
        <location evidence="1">Plastid</location>
        <location evidence="1">Chromoplast</location>
    </subcellularLocation>
</comment>
<comment type="similarity">
    <text evidence="2">Belongs to the cysteine synthase/cystathionine beta-synthase family.</text>
</comment>
<proteinExistence type="evidence at transcript level"/>
<keyword id="KW-0028">Amino-acid biosynthesis</keyword>
<keyword id="KW-0150">Chloroplast</keyword>
<keyword id="KW-0957">Chromoplast</keyword>
<keyword id="KW-0198">Cysteine biosynthesis</keyword>
<keyword id="KW-0934">Plastid</keyword>
<keyword id="KW-0663">Pyridoxal phosphate</keyword>
<keyword id="KW-1185">Reference proteome</keyword>
<keyword id="KW-0808">Transferase</keyword>
<keyword id="KW-0809">Transit peptide</keyword>
<name>CYSKP_SOLTU</name>
<organism>
    <name type="scientific">Solanum tuberosum</name>
    <name type="common">Potato</name>
    <dbReference type="NCBI Taxonomy" id="4113"/>
    <lineage>
        <taxon>Eukaryota</taxon>
        <taxon>Viridiplantae</taxon>
        <taxon>Streptophyta</taxon>
        <taxon>Embryophyta</taxon>
        <taxon>Tracheophyta</taxon>
        <taxon>Spermatophyta</taxon>
        <taxon>Magnoliopsida</taxon>
        <taxon>eudicotyledons</taxon>
        <taxon>Gunneridae</taxon>
        <taxon>Pentapetalae</taxon>
        <taxon>asterids</taxon>
        <taxon>lamiids</taxon>
        <taxon>Solanales</taxon>
        <taxon>Solanaceae</taxon>
        <taxon>Solanoideae</taxon>
        <taxon>Solaneae</taxon>
        <taxon>Solanum</taxon>
    </lineage>
</organism>
<evidence type="ECO:0000250" key="1"/>
<evidence type="ECO:0000305" key="2"/>
<sequence>MASFINNPLTSLCNTKSERNNLFKISLYEAQSLGFSKLNGSRKVAFPSVVCKAVSVPTKSSTEIEGLNIAEDVTQLIGNTPMVYLNTIAKGCVANIAAKLEIMEPCCSVKDRIGFSMIVDAEEKGLISPGKTVLVEPTSGNTGIGLAFIAASRGYKLILTMPASMSLERRVILKAFGAELVLTDPAKGMKGAVSKAEEILNNTPDAYILQQFDNPANPKIHYETTGPEIWEDTKGKIDILVAGIGTGGTITGTGRFLKEQNPNIKIIGVEPTESNVLSGGKPGPHKIQGIGAGFIPGNLDQDVMDEVIEISSDEAVETARTLALQEGLLVGISSGAAALAAIQVGKRPENAGKLIGVVFPSYGERYLSSILFQSIREECEKMKPEL</sequence>
<reference key="1">
    <citation type="online journal article" date="1998" name="Plant Gene Register">
        <title>Isolation of cDNAs encoding cytosolic and plastidic cysteine synthase isoforms from Solanum tuberosum.</title>
        <authorList>
            <person name="Hesse H."/>
            <person name="Hoefgen R."/>
        </authorList>
        <locator>PGR98-057</locator>
    </citation>
    <scope>NUCLEOTIDE SEQUENCE [MRNA]</scope>
    <source>
        <strain>cv. Berolina</strain>
    </source>
</reference>
<protein>
    <recommendedName>
        <fullName>Cysteine synthase, chloroplastic/chromoplastic</fullName>
        <ecNumber>2.5.1.47</ecNumber>
    </recommendedName>
    <alternativeName>
        <fullName>CSase B</fullName>
        <shortName>CS-B</shortName>
    </alternativeName>
    <alternativeName>
        <fullName>O-acetylserine (thiol)-lyase</fullName>
    </alternativeName>
    <alternativeName>
        <fullName>O-acetylserine sulfhydrylase</fullName>
    </alternativeName>
    <alternativeName>
        <fullName>OAS-TL B</fullName>
    </alternativeName>
</protein>
<dbReference type="EC" id="2.5.1.47"/>
<dbReference type="EMBL" id="AF044173">
    <property type="protein sequence ID" value="AAC25636.1"/>
    <property type="molecule type" value="mRNA"/>
</dbReference>
<dbReference type="PIR" id="T07002">
    <property type="entry name" value="T07002"/>
</dbReference>
<dbReference type="SMR" id="O81155"/>
<dbReference type="FunCoup" id="O81155">
    <property type="interactions" value="2210"/>
</dbReference>
<dbReference type="STRING" id="4113.O81155"/>
<dbReference type="PaxDb" id="4113-PGSC0003DMT400059624"/>
<dbReference type="eggNOG" id="KOG1252">
    <property type="taxonomic scope" value="Eukaryota"/>
</dbReference>
<dbReference type="InParanoid" id="O81155"/>
<dbReference type="BRENDA" id="2.5.1.47">
    <property type="organism ID" value="5757"/>
</dbReference>
<dbReference type="UniPathway" id="UPA00136">
    <property type="reaction ID" value="UER00200"/>
</dbReference>
<dbReference type="Proteomes" id="UP000011115">
    <property type="component" value="Unassembled WGS sequence"/>
</dbReference>
<dbReference type="ExpressionAtlas" id="O81155">
    <property type="expression patterns" value="baseline"/>
</dbReference>
<dbReference type="GO" id="GO:0009570">
    <property type="term" value="C:chloroplast stroma"/>
    <property type="evidence" value="ECO:0007669"/>
    <property type="project" value="UniProtKB-SubCell"/>
</dbReference>
<dbReference type="GO" id="GO:0009509">
    <property type="term" value="C:chromoplast"/>
    <property type="evidence" value="ECO:0007669"/>
    <property type="project" value="UniProtKB-SubCell"/>
</dbReference>
<dbReference type="GO" id="GO:0005737">
    <property type="term" value="C:cytoplasm"/>
    <property type="evidence" value="ECO:0000318"/>
    <property type="project" value="GO_Central"/>
</dbReference>
<dbReference type="GO" id="GO:0004124">
    <property type="term" value="F:cysteine synthase activity"/>
    <property type="evidence" value="ECO:0000318"/>
    <property type="project" value="GO_Central"/>
</dbReference>
<dbReference type="GO" id="GO:0006535">
    <property type="term" value="P:cysteine biosynthetic process from serine"/>
    <property type="evidence" value="ECO:0000318"/>
    <property type="project" value="GO_Central"/>
</dbReference>
<dbReference type="GO" id="GO:0009567">
    <property type="term" value="P:double fertilization forming a zygote and endosperm"/>
    <property type="evidence" value="ECO:0000318"/>
    <property type="project" value="GO_Central"/>
</dbReference>
<dbReference type="GO" id="GO:0009860">
    <property type="term" value="P:pollen tube growth"/>
    <property type="evidence" value="ECO:0000318"/>
    <property type="project" value="GO_Central"/>
</dbReference>
<dbReference type="CDD" id="cd01561">
    <property type="entry name" value="CBS_like"/>
    <property type="match status" value="1"/>
</dbReference>
<dbReference type="FunFam" id="3.40.50.1100:FF:000006">
    <property type="entry name" value="Cysteine synthase"/>
    <property type="match status" value="1"/>
</dbReference>
<dbReference type="FunFam" id="3.40.50.1100:FF:000130">
    <property type="entry name" value="Cysteine synthase"/>
    <property type="match status" value="1"/>
</dbReference>
<dbReference type="Gene3D" id="3.40.50.1100">
    <property type="match status" value="2"/>
</dbReference>
<dbReference type="InterPro" id="IPR005856">
    <property type="entry name" value="Cys_synth"/>
</dbReference>
<dbReference type="InterPro" id="IPR050214">
    <property type="entry name" value="Cys_Synth/Cystath_Beta-Synth"/>
</dbReference>
<dbReference type="InterPro" id="IPR005859">
    <property type="entry name" value="CysK"/>
</dbReference>
<dbReference type="InterPro" id="IPR001216">
    <property type="entry name" value="P-phosphate_BS"/>
</dbReference>
<dbReference type="InterPro" id="IPR001926">
    <property type="entry name" value="TrpB-like_PALP"/>
</dbReference>
<dbReference type="InterPro" id="IPR036052">
    <property type="entry name" value="TrpB-like_PALP_sf"/>
</dbReference>
<dbReference type="NCBIfam" id="TIGR01139">
    <property type="entry name" value="cysK"/>
    <property type="match status" value="1"/>
</dbReference>
<dbReference type="NCBIfam" id="TIGR01136">
    <property type="entry name" value="cysKM"/>
    <property type="match status" value="1"/>
</dbReference>
<dbReference type="PANTHER" id="PTHR10314">
    <property type="entry name" value="CYSTATHIONINE BETA-SYNTHASE"/>
    <property type="match status" value="1"/>
</dbReference>
<dbReference type="Pfam" id="PF00291">
    <property type="entry name" value="PALP"/>
    <property type="match status" value="1"/>
</dbReference>
<dbReference type="SUPFAM" id="SSF53686">
    <property type="entry name" value="Tryptophan synthase beta subunit-like PLP-dependent enzymes"/>
    <property type="match status" value="1"/>
</dbReference>
<dbReference type="PROSITE" id="PS00901">
    <property type="entry name" value="CYS_SYNTHASE"/>
    <property type="match status" value="1"/>
</dbReference>